<evidence type="ECO:0000250" key="1"/>
<evidence type="ECO:0000305" key="2"/>
<name>CDN2B_BOVIN</name>
<keyword id="KW-0040">ANK repeat</keyword>
<keyword id="KW-0131">Cell cycle</keyword>
<keyword id="KW-1185">Reference proteome</keyword>
<keyword id="KW-0677">Repeat</keyword>
<keyword id="KW-0043">Tumor suppressor</keyword>
<reference key="1">
    <citation type="submission" date="2005-09" db="EMBL/GenBank/DDBJ databases">
        <authorList>
            <consortium name="NIH - Mammalian Gene Collection (MGC) project"/>
        </authorList>
    </citation>
    <scope>NUCLEOTIDE SEQUENCE [LARGE SCALE MRNA]</scope>
    <source>
        <strain>Crossbred X Angus</strain>
        <tissue>Ileum</tissue>
    </source>
</reference>
<proteinExistence type="evidence at transcript level"/>
<protein>
    <recommendedName>
        <fullName>Cyclin-dependent kinase 4 inhibitor B</fullName>
    </recommendedName>
    <alternativeName>
        <fullName>p14-INK4b</fullName>
    </alternativeName>
</protein>
<comment type="function">
    <text evidence="1">Interacts strongly with CDK4 and CDK6. Potent inhibitor. Potential effector of TGF-beta induced cell cycle arrest (By similarity).</text>
</comment>
<comment type="subunit">
    <text evidence="1">Heterodimer of CDKN2B with CDK4 or CDK6.</text>
</comment>
<comment type="similarity">
    <text evidence="2">Belongs to the CDKN2 cyclin-dependent kinase inhibitor family.</text>
</comment>
<accession>Q2KJD8</accession>
<gene>
    <name type="primary">CDKN2B</name>
</gene>
<organism>
    <name type="scientific">Bos taurus</name>
    <name type="common">Bovine</name>
    <dbReference type="NCBI Taxonomy" id="9913"/>
    <lineage>
        <taxon>Eukaryota</taxon>
        <taxon>Metazoa</taxon>
        <taxon>Chordata</taxon>
        <taxon>Craniata</taxon>
        <taxon>Vertebrata</taxon>
        <taxon>Euteleostomi</taxon>
        <taxon>Mammalia</taxon>
        <taxon>Eutheria</taxon>
        <taxon>Laurasiatheria</taxon>
        <taxon>Artiodactyla</taxon>
        <taxon>Ruminantia</taxon>
        <taxon>Pecora</taxon>
        <taxon>Bovidae</taxon>
        <taxon>Bovinae</taxon>
        <taxon>Bos</taxon>
    </lineage>
</organism>
<sequence length="131" mass="14028">MLSGGGGDADLANAAARGQVEAVRQLLEAGVDPNRLNRFGRRPIQVMMMGSARVAELLLLHGADPNCADPATLTRPVHDAAREGFLDTLVALHRAGGRLDVRDAWGRLPVDLAEERGHRDVARYLRATAGD</sequence>
<feature type="chain" id="PRO_0000310856" description="Cyclin-dependent kinase 4 inhibitor B">
    <location>
        <begin position="1"/>
        <end position="131"/>
    </location>
</feature>
<feature type="repeat" description="ANK 1">
    <location>
        <begin position="6"/>
        <end position="35"/>
    </location>
</feature>
<feature type="repeat" description="ANK 2">
    <location>
        <begin position="39"/>
        <end position="67"/>
    </location>
</feature>
<feature type="repeat" description="ANK 3">
    <location>
        <begin position="72"/>
        <end position="101"/>
    </location>
</feature>
<feature type="repeat" description="ANK 4">
    <location>
        <begin position="105"/>
        <end position="131"/>
    </location>
</feature>
<dbReference type="EMBL" id="BC105392">
    <property type="protein sequence ID" value="AAI05393.1"/>
    <property type="molecule type" value="mRNA"/>
</dbReference>
<dbReference type="RefSeq" id="NP_001069362.1">
    <property type="nucleotide sequence ID" value="NM_001075894.1"/>
</dbReference>
<dbReference type="SMR" id="Q2KJD8"/>
<dbReference type="FunCoup" id="Q2KJD8">
    <property type="interactions" value="312"/>
</dbReference>
<dbReference type="STRING" id="9913.ENSBTAP00000065926"/>
<dbReference type="PaxDb" id="9913-ENSBTAP00000002652"/>
<dbReference type="GeneID" id="527124"/>
<dbReference type="KEGG" id="bta:527124"/>
<dbReference type="CTD" id="1030"/>
<dbReference type="eggNOG" id="KOG0504">
    <property type="taxonomic scope" value="Eukaryota"/>
</dbReference>
<dbReference type="InParanoid" id="Q2KJD8"/>
<dbReference type="OrthoDB" id="539213at2759"/>
<dbReference type="Proteomes" id="UP000009136">
    <property type="component" value="Unplaced"/>
</dbReference>
<dbReference type="GO" id="GO:0005737">
    <property type="term" value="C:cytoplasm"/>
    <property type="evidence" value="ECO:0000250"/>
    <property type="project" value="UniProtKB"/>
</dbReference>
<dbReference type="GO" id="GO:0005634">
    <property type="term" value="C:nucleus"/>
    <property type="evidence" value="ECO:0000250"/>
    <property type="project" value="UniProtKB"/>
</dbReference>
<dbReference type="GO" id="GO:0004861">
    <property type="term" value="F:cyclin-dependent protein serine/threonine kinase inhibitor activity"/>
    <property type="evidence" value="ECO:0000250"/>
    <property type="project" value="UniProtKB"/>
</dbReference>
<dbReference type="GO" id="GO:0019901">
    <property type="term" value="F:protein kinase binding"/>
    <property type="evidence" value="ECO:0000250"/>
    <property type="project" value="UniProtKB"/>
</dbReference>
<dbReference type="GO" id="GO:0071460">
    <property type="term" value="P:cellular response to cell-matrix adhesion"/>
    <property type="evidence" value="ECO:0000250"/>
    <property type="project" value="UniProtKB"/>
</dbReference>
<dbReference type="GO" id="GO:0031670">
    <property type="term" value="P:cellular response to nutrient"/>
    <property type="evidence" value="ECO:0000250"/>
    <property type="project" value="UniProtKB"/>
</dbReference>
<dbReference type="GO" id="GO:0030219">
    <property type="term" value="P:megakaryocyte differentiation"/>
    <property type="evidence" value="ECO:0000250"/>
    <property type="project" value="UniProtKB"/>
</dbReference>
<dbReference type="GO" id="GO:0008285">
    <property type="term" value="P:negative regulation of cell population proliferation"/>
    <property type="evidence" value="ECO:0000250"/>
    <property type="project" value="UniProtKB"/>
</dbReference>
<dbReference type="GO" id="GO:0050680">
    <property type="term" value="P:negative regulation of epithelial cell proliferation"/>
    <property type="evidence" value="ECO:0000250"/>
    <property type="project" value="UniProtKB"/>
</dbReference>
<dbReference type="GO" id="GO:2000134">
    <property type="term" value="P:negative regulation of G1/S transition of mitotic cell cycle"/>
    <property type="evidence" value="ECO:0000250"/>
    <property type="project" value="UniProtKB"/>
</dbReference>
<dbReference type="GO" id="GO:0030511">
    <property type="term" value="P:positive regulation of transforming growth factor beta receptor signaling pathway"/>
    <property type="evidence" value="ECO:0000250"/>
    <property type="project" value="UniProtKB"/>
</dbReference>
<dbReference type="GO" id="GO:0070316">
    <property type="term" value="P:regulation of G0 to G1 transition"/>
    <property type="evidence" value="ECO:0000250"/>
    <property type="project" value="UniProtKB"/>
</dbReference>
<dbReference type="GO" id="GO:2000045">
    <property type="term" value="P:regulation of G1/S transition of mitotic cell cycle"/>
    <property type="evidence" value="ECO:0000318"/>
    <property type="project" value="GO_Central"/>
</dbReference>
<dbReference type="GO" id="GO:0007179">
    <property type="term" value="P:transforming growth factor beta receptor signaling pathway"/>
    <property type="evidence" value="ECO:0000250"/>
    <property type="project" value="UniProtKB"/>
</dbReference>
<dbReference type="FunFam" id="1.25.40.20:FF:000107">
    <property type="entry name" value="cyclin-dependent kinase 4 inhibitor B"/>
    <property type="match status" value="1"/>
</dbReference>
<dbReference type="Gene3D" id="1.25.40.20">
    <property type="entry name" value="Ankyrin repeat-containing domain"/>
    <property type="match status" value="1"/>
</dbReference>
<dbReference type="InterPro" id="IPR050776">
    <property type="entry name" value="Ank_Repeat/CDKN_Inhibitor"/>
</dbReference>
<dbReference type="InterPro" id="IPR002110">
    <property type="entry name" value="Ankyrin_rpt"/>
</dbReference>
<dbReference type="InterPro" id="IPR036770">
    <property type="entry name" value="Ankyrin_rpt-contain_sf"/>
</dbReference>
<dbReference type="PANTHER" id="PTHR24201">
    <property type="entry name" value="ANK_REP_REGION DOMAIN-CONTAINING PROTEIN"/>
    <property type="match status" value="1"/>
</dbReference>
<dbReference type="PANTHER" id="PTHR24201:SF8">
    <property type="entry name" value="CYCLIN-DEPENDENT KINASE 4 INHIBITOR B"/>
    <property type="match status" value="1"/>
</dbReference>
<dbReference type="Pfam" id="PF12796">
    <property type="entry name" value="Ank_2"/>
    <property type="match status" value="1"/>
</dbReference>
<dbReference type="SMART" id="SM00248">
    <property type="entry name" value="ANK"/>
    <property type="match status" value="3"/>
</dbReference>
<dbReference type="SUPFAM" id="SSF48403">
    <property type="entry name" value="Ankyrin repeat"/>
    <property type="match status" value="1"/>
</dbReference>
<dbReference type="PROSITE" id="PS50297">
    <property type="entry name" value="ANK_REP_REGION"/>
    <property type="match status" value="1"/>
</dbReference>
<dbReference type="PROSITE" id="PS50088">
    <property type="entry name" value="ANK_REPEAT"/>
    <property type="match status" value="1"/>
</dbReference>